<protein>
    <recommendedName>
        <fullName>Cytochrome c oxidase subunit 2</fullName>
        <ecNumber>7.1.1.9</ecNumber>
    </recommendedName>
    <alternativeName>
        <fullName>Cytochrome c oxidase polypeptide II</fullName>
    </alternativeName>
</protein>
<dbReference type="EC" id="7.1.1.9"/>
<dbReference type="EMBL" id="AF028230">
    <property type="protein sequence ID" value="AAC00123.1"/>
    <property type="molecule type" value="Genomic_DNA"/>
</dbReference>
<dbReference type="RefSeq" id="YP_778932.1">
    <property type="nucleotide sequence ID" value="NC_008434.1"/>
</dbReference>
<dbReference type="SMR" id="O47681"/>
<dbReference type="GeneID" id="4355754"/>
<dbReference type="KEGG" id="vvp:4355754"/>
<dbReference type="CTD" id="4513"/>
<dbReference type="OrthoDB" id="19997at33554"/>
<dbReference type="Proteomes" id="UP000286640">
    <property type="component" value="Mitochondrion MT"/>
</dbReference>
<dbReference type="GO" id="GO:0005743">
    <property type="term" value="C:mitochondrial inner membrane"/>
    <property type="evidence" value="ECO:0007669"/>
    <property type="project" value="UniProtKB-SubCell"/>
</dbReference>
<dbReference type="GO" id="GO:0045277">
    <property type="term" value="C:respiratory chain complex IV"/>
    <property type="evidence" value="ECO:0000250"/>
    <property type="project" value="UniProtKB"/>
</dbReference>
<dbReference type="GO" id="GO:0005507">
    <property type="term" value="F:copper ion binding"/>
    <property type="evidence" value="ECO:0007669"/>
    <property type="project" value="InterPro"/>
</dbReference>
<dbReference type="GO" id="GO:0004129">
    <property type="term" value="F:cytochrome-c oxidase activity"/>
    <property type="evidence" value="ECO:0007669"/>
    <property type="project" value="UniProtKB-EC"/>
</dbReference>
<dbReference type="GO" id="GO:0042773">
    <property type="term" value="P:ATP synthesis coupled electron transport"/>
    <property type="evidence" value="ECO:0007669"/>
    <property type="project" value="TreeGrafter"/>
</dbReference>
<dbReference type="CDD" id="cd13912">
    <property type="entry name" value="CcO_II_C"/>
    <property type="match status" value="1"/>
</dbReference>
<dbReference type="FunFam" id="1.10.287.90:FF:000001">
    <property type="entry name" value="Cytochrome c oxidase subunit 2"/>
    <property type="match status" value="1"/>
</dbReference>
<dbReference type="FunFam" id="2.60.40.420:FF:000001">
    <property type="entry name" value="Cytochrome c oxidase subunit 2"/>
    <property type="match status" value="1"/>
</dbReference>
<dbReference type="Gene3D" id="1.10.287.90">
    <property type="match status" value="1"/>
</dbReference>
<dbReference type="Gene3D" id="2.60.40.420">
    <property type="entry name" value="Cupredoxins - blue copper proteins"/>
    <property type="match status" value="1"/>
</dbReference>
<dbReference type="InterPro" id="IPR045187">
    <property type="entry name" value="CcO_II"/>
</dbReference>
<dbReference type="InterPro" id="IPR002429">
    <property type="entry name" value="CcO_II-like_C"/>
</dbReference>
<dbReference type="InterPro" id="IPR034210">
    <property type="entry name" value="CcO_II_C"/>
</dbReference>
<dbReference type="InterPro" id="IPR001505">
    <property type="entry name" value="Copper_CuA"/>
</dbReference>
<dbReference type="InterPro" id="IPR008972">
    <property type="entry name" value="Cupredoxin"/>
</dbReference>
<dbReference type="InterPro" id="IPR014222">
    <property type="entry name" value="Cyt_c_oxidase_su2"/>
</dbReference>
<dbReference type="InterPro" id="IPR011759">
    <property type="entry name" value="Cyt_c_oxidase_su2_TM_dom"/>
</dbReference>
<dbReference type="InterPro" id="IPR036257">
    <property type="entry name" value="Cyt_c_oxidase_su2_TM_sf"/>
</dbReference>
<dbReference type="NCBIfam" id="TIGR02866">
    <property type="entry name" value="CoxB"/>
    <property type="match status" value="1"/>
</dbReference>
<dbReference type="PANTHER" id="PTHR22888:SF9">
    <property type="entry name" value="CYTOCHROME C OXIDASE SUBUNIT 2"/>
    <property type="match status" value="1"/>
</dbReference>
<dbReference type="PANTHER" id="PTHR22888">
    <property type="entry name" value="CYTOCHROME C OXIDASE, SUBUNIT II"/>
    <property type="match status" value="1"/>
</dbReference>
<dbReference type="Pfam" id="PF00116">
    <property type="entry name" value="COX2"/>
    <property type="match status" value="1"/>
</dbReference>
<dbReference type="Pfam" id="PF02790">
    <property type="entry name" value="COX2_TM"/>
    <property type="match status" value="1"/>
</dbReference>
<dbReference type="PRINTS" id="PR01166">
    <property type="entry name" value="CYCOXIDASEII"/>
</dbReference>
<dbReference type="SUPFAM" id="SSF49503">
    <property type="entry name" value="Cupredoxins"/>
    <property type="match status" value="1"/>
</dbReference>
<dbReference type="SUPFAM" id="SSF81464">
    <property type="entry name" value="Cytochrome c oxidase subunit II-like, transmembrane region"/>
    <property type="match status" value="1"/>
</dbReference>
<dbReference type="PROSITE" id="PS00078">
    <property type="entry name" value="COX2"/>
    <property type="match status" value="1"/>
</dbReference>
<dbReference type="PROSITE" id="PS50857">
    <property type="entry name" value="COX2_CUA"/>
    <property type="match status" value="1"/>
</dbReference>
<dbReference type="PROSITE" id="PS50999">
    <property type="entry name" value="COX2_TM"/>
    <property type="match status" value="1"/>
</dbReference>
<keyword id="KW-0186">Copper</keyword>
<keyword id="KW-0249">Electron transport</keyword>
<keyword id="KW-0460">Magnesium</keyword>
<keyword id="KW-0472">Membrane</keyword>
<keyword id="KW-0479">Metal-binding</keyword>
<keyword id="KW-0496">Mitochondrion</keyword>
<keyword id="KW-0999">Mitochondrion inner membrane</keyword>
<keyword id="KW-0597">Phosphoprotein</keyword>
<keyword id="KW-1185">Reference proteome</keyword>
<keyword id="KW-0679">Respiratory chain</keyword>
<keyword id="KW-1278">Translocase</keyword>
<keyword id="KW-0812">Transmembrane</keyword>
<keyword id="KW-1133">Transmembrane helix</keyword>
<keyword id="KW-0813">Transport</keyword>
<feature type="chain" id="PRO_0000183712" description="Cytochrome c oxidase subunit 2">
    <location>
        <begin position="1"/>
        <end position="227"/>
    </location>
</feature>
<feature type="topological domain" description="Mitochondrial intermembrane" evidence="4">
    <location>
        <begin position="1"/>
        <end position="14"/>
    </location>
</feature>
<feature type="transmembrane region" description="Helical; Name=I" evidence="4">
    <location>
        <begin position="15"/>
        <end position="45"/>
    </location>
</feature>
<feature type="topological domain" description="Mitochondrial matrix" evidence="4">
    <location>
        <begin position="46"/>
        <end position="59"/>
    </location>
</feature>
<feature type="transmembrane region" description="Helical; Name=II" evidence="4">
    <location>
        <begin position="60"/>
        <end position="87"/>
    </location>
</feature>
<feature type="topological domain" description="Mitochondrial intermembrane" evidence="4">
    <location>
        <begin position="88"/>
        <end position="227"/>
    </location>
</feature>
<feature type="binding site" evidence="4">
    <location>
        <position position="161"/>
    </location>
    <ligand>
        <name>Cu cation</name>
        <dbReference type="ChEBI" id="CHEBI:23378"/>
        <label>A1</label>
    </ligand>
</feature>
<feature type="binding site" evidence="4">
    <location>
        <position position="196"/>
    </location>
    <ligand>
        <name>Cu cation</name>
        <dbReference type="ChEBI" id="CHEBI:23378"/>
        <label>A1</label>
    </ligand>
</feature>
<feature type="binding site" evidence="4">
    <location>
        <position position="196"/>
    </location>
    <ligand>
        <name>Cu cation</name>
        <dbReference type="ChEBI" id="CHEBI:23378"/>
        <label>A2</label>
    </ligand>
</feature>
<feature type="binding site" evidence="4">
    <location>
        <position position="198"/>
    </location>
    <ligand>
        <name>Cu cation</name>
        <dbReference type="ChEBI" id="CHEBI:23378"/>
        <label>A2</label>
    </ligand>
</feature>
<feature type="binding site" evidence="4">
    <location>
        <position position="198"/>
    </location>
    <ligand>
        <name>Mg(2+)</name>
        <dbReference type="ChEBI" id="CHEBI:18420"/>
        <note>ligand shared with MT-CO1</note>
    </ligand>
</feature>
<feature type="binding site" evidence="4">
    <location>
        <position position="200"/>
    </location>
    <ligand>
        <name>Cu cation</name>
        <dbReference type="ChEBI" id="CHEBI:23378"/>
        <label>A1</label>
    </ligand>
</feature>
<feature type="binding site" evidence="4">
    <location>
        <position position="200"/>
    </location>
    <ligand>
        <name>Cu cation</name>
        <dbReference type="ChEBI" id="CHEBI:23378"/>
        <label>A2</label>
    </ligand>
</feature>
<feature type="binding site" evidence="4">
    <location>
        <position position="204"/>
    </location>
    <ligand>
        <name>Cu cation</name>
        <dbReference type="ChEBI" id="CHEBI:23378"/>
        <label>A2</label>
    </ligand>
</feature>
<feature type="binding site" evidence="4">
    <location>
        <position position="207"/>
    </location>
    <ligand>
        <name>Cu cation</name>
        <dbReference type="ChEBI" id="CHEBI:23378"/>
        <label>A1</label>
    </ligand>
</feature>
<feature type="modified residue" description="Phosphotyrosine" evidence="2">
    <location>
        <position position="218"/>
    </location>
</feature>
<comment type="function">
    <text evidence="3">Component of the cytochrome c oxidase, the last enzyme in the mitochondrial electron transport chain which drives oxidative phosphorylation. The respiratory chain contains 3 multisubunit complexes succinate dehydrogenase (complex II, CII), ubiquinol-cytochrome c oxidoreductase (cytochrome b-c1 complex, complex III, CIII) and cytochrome c oxidase (complex IV, CIV), that cooperate to transfer electrons derived from NADH and succinate to molecular oxygen, creating an electrochemical gradient over the inner membrane that drives transmembrane transport and the ATP synthase. Cytochrome c oxidase is the component of the respiratory chain that catalyzes the reduction of oxygen to water. Electrons originating from reduced cytochrome c in the intermembrane space (IMS) are transferred via the dinuclear copper A center (CU(A)) of subunit 2 and heme A of subunit 1 to the active site in subunit 1, a binuclear center (BNC) formed by heme A3 and copper B (CU(B)). The BNC reduces molecular oxygen to 2 water molecules using 4 electrons from cytochrome c in the IMS and 4 protons from the mitochondrial matrix.</text>
</comment>
<comment type="catalytic activity">
    <reaction evidence="3">
        <text>4 Fe(II)-[cytochrome c] + O2 + 8 H(+)(in) = 4 Fe(III)-[cytochrome c] + 2 H2O + 4 H(+)(out)</text>
        <dbReference type="Rhea" id="RHEA:11436"/>
        <dbReference type="Rhea" id="RHEA-COMP:10350"/>
        <dbReference type="Rhea" id="RHEA-COMP:14399"/>
        <dbReference type="ChEBI" id="CHEBI:15377"/>
        <dbReference type="ChEBI" id="CHEBI:15378"/>
        <dbReference type="ChEBI" id="CHEBI:15379"/>
        <dbReference type="ChEBI" id="CHEBI:29033"/>
        <dbReference type="ChEBI" id="CHEBI:29034"/>
        <dbReference type="EC" id="7.1.1.9"/>
    </reaction>
    <physiologicalReaction direction="left-to-right" evidence="3">
        <dbReference type="Rhea" id="RHEA:11437"/>
    </physiologicalReaction>
</comment>
<comment type="cofactor">
    <cofactor evidence="4">
        <name>Cu cation</name>
        <dbReference type="ChEBI" id="CHEBI:23378"/>
    </cofactor>
    <text evidence="4">Binds a dinuclear copper A center per subunit.</text>
</comment>
<comment type="subunit">
    <text evidence="1 4">Component of the cytochrome c oxidase (complex IV, CIV), a multisubunit enzyme composed of 14 subunits. The complex is composed of a catalytic core of 3 subunits MT-CO1, MT-CO2 and MT-CO3, encoded in the mitochondrial DNA, and 11 supernumerary subunits COX4I, COX5A, COX5B, COX6A, COX6B, COX6C, COX7A, COX7B, COX7C, COX8 and NDUFA4, which are encoded in the nuclear genome. The complex exists as a monomer or a dimer and forms supercomplexes (SCs) in the inner mitochondrial membrane with NADH-ubiquinone oxidoreductase (complex I, CI) and ubiquinol-cytochrome c oxidoreductase (cytochrome b-c1 complex, complex III, CIII), resulting in different assemblies (supercomplex SCI(1)III(2)IV(1) and megacomplex MCI(2)III(2)IV(2)) (By similarity). Found in a complex with TMEM177, COA6, COX18, COX20, SCO1 and SCO2. Interacts with TMEM177 in a COX20-dependent manner. Interacts with COX20. Interacts with COX16 (By similarity).</text>
</comment>
<comment type="subcellular location">
    <subcellularLocation>
        <location evidence="4">Mitochondrion inner membrane</location>
        <topology evidence="4">Multi-pass membrane protein</topology>
    </subcellularLocation>
</comment>
<comment type="similarity">
    <text evidence="5">Belongs to the cytochrome c oxidase subunit 2 family.</text>
</comment>
<organism>
    <name type="scientific">Vulpes vulpes</name>
    <name type="common">Red fox</name>
    <dbReference type="NCBI Taxonomy" id="9627"/>
    <lineage>
        <taxon>Eukaryota</taxon>
        <taxon>Metazoa</taxon>
        <taxon>Chordata</taxon>
        <taxon>Craniata</taxon>
        <taxon>Vertebrata</taxon>
        <taxon>Euteleostomi</taxon>
        <taxon>Mammalia</taxon>
        <taxon>Eutheria</taxon>
        <taxon>Laurasiatheria</taxon>
        <taxon>Carnivora</taxon>
        <taxon>Caniformia</taxon>
        <taxon>Canidae</taxon>
        <taxon>Vulpes</taxon>
    </lineage>
</organism>
<sequence length="227" mass="26048">MAYPFQLGLQDATSPIMEELLHFHDHTLMIVFLISSLVLYIITLMLTTKLTHTSTMDAQEVETVWTILPAIILILIALPSLRILYMMDEINNPSLTVKTMGHQWYWSYEYTDYEDLNFDSYMIPTQELKPGELRLLEVDNRVVLPMEMTVRMLISSEDVLHSWAVPSLGLKTDAIPGRLNQTTLMAMRPGLYYGQCSEICGSNHSFMPIVLEMVPLSYFETWSAVMV</sequence>
<accession>O47681</accession>
<geneLocation type="mitochondrion"/>
<gene>
    <name type="primary">MT-CO2</name>
    <name type="synonym">COII</name>
    <name type="synonym">COX2</name>
    <name type="synonym">COXII</name>
    <name type="synonym">MTCO2</name>
</gene>
<reference key="1">
    <citation type="journal article" date="1997" name="Syst. Biol.">
        <title>Molecular systematics of the Canidae.</title>
        <authorList>
            <person name="Wayne R.K."/>
            <person name="Geffen E."/>
            <person name="Girman D.J."/>
            <person name="Koepfli K.-P."/>
            <person name="Lau L.M."/>
            <person name="Marshall C.R."/>
        </authorList>
    </citation>
    <scope>NUCLEOTIDE SEQUENCE [GENOMIC DNA]</scope>
</reference>
<evidence type="ECO:0000250" key="1">
    <source>
        <dbReference type="UniProtKB" id="P00403"/>
    </source>
</evidence>
<evidence type="ECO:0000250" key="2">
    <source>
        <dbReference type="UniProtKB" id="P00406"/>
    </source>
</evidence>
<evidence type="ECO:0000250" key="3">
    <source>
        <dbReference type="UniProtKB" id="P00410"/>
    </source>
</evidence>
<evidence type="ECO:0000250" key="4">
    <source>
        <dbReference type="UniProtKB" id="P68530"/>
    </source>
</evidence>
<evidence type="ECO:0000305" key="5"/>
<name>COX2_VULVU</name>
<proteinExistence type="inferred from homology"/>